<dbReference type="EMBL" id="CP000855">
    <property type="protein sequence ID" value="ACJ15629.1"/>
    <property type="molecule type" value="Genomic_DNA"/>
</dbReference>
<dbReference type="RefSeq" id="WP_012571102.1">
    <property type="nucleotide sequence ID" value="NC_011529.1"/>
</dbReference>
<dbReference type="SMR" id="B6YSU2"/>
<dbReference type="STRING" id="523850.TON_0144"/>
<dbReference type="GeneID" id="7017798"/>
<dbReference type="KEGG" id="ton:TON_0144"/>
<dbReference type="PATRIC" id="fig|523850.10.peg.144"/>
<dbReference type="eggNOG" id="arCOG04209">
    <property type="taxonomic scope" value="Archaea"/>
</dbReference>
<dbReference type="HOGENOM" id="CLU_080796_1_0_2"/>
<dbReference type="OrthoDB" id="8183at2157"/>
<dbReference type="Proteomes" id="UP000002727">
    <property type="component" value="Chromosome"/>
</dbReference>
<dbReference type="GO" id="GO:0022625">
    <property type="term" value="C:cytosolic large ribosomal subunit"/>
    <property type="evidence" value="ECO:0007669"/>
    <property type="project" value="TreeGrafter"/>
</dbReference>
<dbReference type="GO" id="GO:0003723">
    <property type="term" value="F:RNA binding"/>
    <property type="evidence" value="ECO:0007669"/>
    <property type="project" value="TreeGrafter"/>
</dbReference>
<dbReference type="GO" id="GO:0003735">
    <property type="term" value="F:structural constituent of ribosome"/>
    <property type="evidence" value="ECO:0007669"/>
    <property type="project" value="InterPro"/>
</dbReference>
<dbReference type="GO" id="GO:0002181">
    <property type="term" value="P:cytoplasmic translation"/>
    <property type="evidence" value="ECO:0007669"/>
    <property type="project" value="TreeGrafter"/>
</dbReference>
<dbReference type="FunFam" id="3.40.1120.10:FF:000002">
    <property type="entry name" value="50S ribosomal protein L15e"/>
    <property type="match status" value="1"/>
</dbReference>
<dbReference type="Gene3D" id="3.40.1120.10">
    <property type="entry name" value="Ribosomal protein l15e"/>
    <property type="match status" value="1"/>
</dbReference>
<dbReference type="HAMAP" id="MF_00256">
    <property type="entry name" value="Ribosomal_eL15"/>
    <property type="match status" value="1"/>
</dbReference>
<dbReference type="InterPro" id="IPR024794">
    <property type="entry name" value="Rbsml_eL15_core_dom_sf"/>
</dbReference>
<dbReference type="InterPro" id="IPR000439">
    <property type="entry name" value="Ribosomal_eL15"/>
</dbReference>
<dbReference type="InterPro" id="IPR020926">
    <property type="entry name" value="Ribosomal_eL15_arc"/>
</dbReference>
<dbReference type="InterPro" id="IPR020925">
    <property type="entry name" value="Ribosomal_eL15_CS"/>
</dbReference>
<dbReference type="InterPro" id="IPR012678">
    <property type="entry name" value="Ribosomal_uL23/eL15/eS24_sf"/>
</dbReference>
<dbReference type="NCBIfam" id="NF003269">
    <property type="entry name" value="PRK04243.1"/>
    <property type="match status" value="1"/>
</dbReference>
<dbReference type="PANTHER" id="PTHR11847:SF4">
    <property type="entry name" value="LARGE RIBOSOMAL SUBUNIT PROTEIN EL15"/>
    <property type="match status" value="1"/>
</dbReference>
<dbReference type="PANTHER" id="PTHR11847">
    <property type="entry name" value="RIBOSOMAL PROTEIN L15"/>
    <property type="match status" value="1"/>
</dbReference>
<dbReference type="Pfam" id="PF00827">
    <property type="entry name" value="Ribosomal_L15e"/>
    <property type="match status" value="1"/>
</dbReference>
<dbReference type="SMART" id="SM01384">
    <property type="entry name" value="Ribosomal_L15e"/>
    <property type="match status" value="1"/>
</dbReference>
<dbReference type="SUPFAM" id="SSF54189">
    <property type="entry name" value="Ribosomal proteins S24e, L23 and L15e"/>
    <property type="match status" value="1"/>
</dbReference>
<dbReference type="PROSITE" id="PS01194">
    <property type="entry name" value="RIBOSOMAL_L15E"/>
    <property type="match status" value="1"/>
</dbReference>
<gene>
    <name evidence="1" type="primary">rpl15e</name>
    <name type="ordered locus">TON_0144</name>
</gene>
<reference key="1">
    <citation type="journal article" date="2008" name="J. Bacteriol.">
        <title>The complete genome sequence of Thermococcus onnurineus NA1 reveals a mixed heterotrophic and carboxydotrophic metabolism.</title>
        <authorList>
            <person name="Lee H.S."/>
            <person name="Kang S.G."/>
            <person name="Bae S.S."/>
            <person name="Lim J.K."/>
            <person name="Cho Y."/>
            <person name="Kim Y.J."/>
            <person name="Jeon J.H."/>
            <person name="Cha S.-S."/>
            <person name="Kwon K.K."/>
            <person name="Kim H.-T."/>
            <person name="Park C.-J."/>
            <person name="Lee H.-W."/>
            <person name="Kim S.I."/>
            <person name="Chun J."/>
            <person name="Colwell R.R."/>
            <person name="Kim S.-J."/>
            <person name="Lee J.-H."/>
        </authorList>
    </citation>
    <scope>NUCLEOTIDE SEQUENCE [LARGE SCALE GENOMIC DNA]</scope>
    <source>
        <strain>NA1</strain>
    </source>
</reference>
<organism>
    <name type="scientific">Thermococcus onnurineus (strain NA1)</name>
    <dbReference type="NCBI Taxonomy" id="523850"/>
    <lineage>
        <taxon>Archaea</taxon>
        <taxon>Methanobacteriati</taxon>
        <taxon>Methanobacteriota</taxon>
        <taxon>Thermococci</taxon>
        <taxon>Thermococcales</taxon>
        <taxon>Thermococcaceae</taxon>
        <taxon>Thermococcus</taxon>
    </lineage>
</organism>
<feature type="chain" id="PRO_1000114028" description="Large ribosomal subunit protein eL15">
    <location>
        <begin position="1"/>
        <end position="194"/>
    </location>
</feature>
<feature type="region of interest" description="Disordered" evidence="2">
    <location>
        <begin position="162"/>
        <end position="194"/>
    </location>
</feature>
<feature type="compositionally biased region" description="Basic residues" evidence="2">
    <location>
        <begin position="167"/>
        <end position="176"/>
    </location>
</feature>
<sequence>MGMYKYIREAWKSPKKSYVGQLLKKRMIKWRREPVVVRVERPTRLDRARSLGYQAKQGYVIVRVRVRRGGRKRPRWKGGRKPSKMGMVKYSPKKSLQWIAEEKAARKFPNLEVLNSYWVGEDGMYKWFEVIMVDPHHPVIKSDPKIAWIAGKAHKGRVFRGLTSAGRKSRGLRNKGKGAEKVRPSVRANKGKTK</sequence>
<evidence type="ECO:0000255" key="1">
    <source>
        <dbReference type="HAMAP-Rule" id="MF_00256"/>
    </source>
</evidence>
<evidence type="ECO:0000256" key="2">
    <source>
        <dbReference type="SAM" id="MobiDB-lite"/>
    </source>
</evidence>
<evidence type="ECO:0000305" key="3"/>
<keyword id="KW-0687">Ribonucleoprotein</keyword>
<keyword id="KW-0689">Ribosomal protein</keyword>
<protein>
    <recommendedName>
        <fullName evidence="1">Large ribosomal subunit protein eL15</fullName>
    </recommendedName>
    <alternativeName>
        <fullName evidence="3">50S ribosomal protein L15e</fullName>
    </alternativeName>
</protein>
<comment type="similarity">
    <text evidence="1">Belongs to the eukaryotic ribosomal protein eL15 family.</text>
</comment>
<name>RL15E_THEON</name>
<accession>B6YSU2</accession>
<proteinExistence type="inferred from homology"/>